<proteinExistence type="evidence at protein level"/>
<evidence type="ECO:0000250" key="1"/>
<evidence type="ECO:0000250" key="2">
    <source>
        <dbReference type="UniProtKB" id="P10291"/>
    </source>
</evidence>
<evidence type="ECO:0000250" key="3">
    <source>
        <dbReference type="UniProtKB" id="P29426"/>
    </source>
</evidence>
<evidence type="ECO:0000269" key="4">
    <source ref="1"/>
</evidence>
<evidence type="ECO:0000305" key="5"/>
<protein>
    <recommendedName>
        <fullName>U14-ctenitoxin-Pn1a</fullName>
        <shortName>U14-CNTX-Pn1a</shortName>
    </recommendedName>
    <alternativeName>
        <fullName>Neurotoxin PNTx22A0C1</fullName>
    </alternativeName>
</protein>
<reference evidence="5" key="1">
    <citation type="submission" date="2004-05" db="UniProtKB">
        <title>New protein PNTx22A0C1 from venom of Brazilian armed spider Phoneutria nigriventer has strong sequence similarities with various arthropod neurotoxins and the Cucurbit family of proteinase inhibitors from plants.</title>
        <authorList>
            <person name="Richardson M."/>
            <person name="Pimenta A.M.C."/>
            <person name="Bemquerer M.P."/>
            <person name="Santoro M.M."/>
            <person name="Figueiredo S.G."/>
            <person name="Cordeiro M.N."/>
        </authorList>
    </citation>
    <scope>PROTEIN SEQUENCE</scope>
    <scope>SUBCELLULAR LOCATION</scope>
    <scope>TISSUE SPECIFICITY</scope>
    <scope>MASS SPECTROMETRY</scope>
    <source>
        <tissue evidence="4">Venom gland</tissue>
    </source>
</reference>
<organism>
    <name type="scientific">Phoneutria nigriventer</name>
    <name type="common">Brazilian armed spider</name>
    <name type="synonym">Ctenus nigriventer</name>
    <dbReference type="NCBI Taxonomy" id="6918"/>
    <lineage>
        <taxon>Eukaryota</taxon>
        <taxon>Metazoa</taxon>
        <taxon>Ecdysozoa</taxon>
        <taxon>Arthropoda</taxon>
        <taxon>Chelicerata</taxon>
        <taxon>Arachnida</taxon>
        <taxon>Araneae</taxon>
        <taxon>Araneomorphae</taxon>
        <taxon>Entelegynae</taxon>
        <taxon>Lycosoidea</taxon>
        <taxon>Ctenidae</taxon>
        <taxon>Phoneutria</taxon>
    </lineage>
</organism>
<dbReference type="SMR" id="P83998"/>
<dbReference type="ArachnoServer" id="AS000236">
    <property type="toxin name" value="U14-ctenitoxin-Pn1a"/>
</dbReference>
<dbReference type="GO" id="GO:0005576">
    <property type="term" value="C:extracellular region"/>
    <property type="evidence" value="ECO:0007669"/>
    <property type="project" value="UniProtKB-SubCell"/>
</dbReference>
<dbReference type="GO" id="GO:0004867">
    <property type="term" value="F:serine-type endopeptidase inhibitor activity"/>
    <property type="evidence" value="ECO:0007669"/>
    <property type="project" value="UniProtKB-KW"/>
</dbReference>
<dbReference type="GO" id="GO:0090729">
    <property type="term" value="F:toxin activity"/>
    <property type="evidence" value="ECO:0007669"/>
    <property type="project" value="UniProtKB-KW"/>
</dbReference>
<dbReference type="Gene3D" id="4.10.75.20">
    <property type="match status" value="1"/>
</dbReference>
<dbReference type="InterPro" id="IPR000737">
    <property type="entry name" value="Prot_inh_squash"/>
</dbReference>
<dbReference type="InterPro" id="IPR011052">
    <property type="entry name" value="Proteinase_amylase_inhib_sf"/>
</dbReference>
<dbReference type="Pfam" id="PF00299">
    <property type="entry name" value="Squash"/>
    <property type="match status" value="1"/>
</dbReference>
<dbReference type="SUPFAM" id="SSF57027">
    <property type="entry name" value="Plant inhibitors of proteinases and amylases"/>
    <property type="match status" value="1"/>
</dbReference>
<comment type="function">
    <text evidence="3">Neurotoxin.</text>
</comment>
<comment type="subcellular location">
    <subcellularLocation>
        <location evidence="4">Secreted</location>
    </subcellularLocation>
</comment>
<comment type="tissue specificity">
    <text evidence="4">Expressed by the venom gland.</text>
</comment>
<comment type="domain">
    <text evidence="1">The presence of a 'disulfide through disulfide knot' structurally defines this protein as a knottin.</text>
</comment>
<comment type="mass spectrometry" mass="4080.8" method="Electrospray" evidence="4"/>
<comment type="similarity">
    <text evidence="5">Belongs to the protease inhibitor I7 (squash-type serine protease inhibitor) family.</text>
</comment>
<feature type="peptide" id="PRO_0000044859" description="U14-ctenitoxin-Pn1a">
    <location>
        <begin position="1"/>
        <end position="35"/>
    </location>
</feature>
<feature type="site" description="Reactive bond" evidence="2">
    <location>
        <begin position="5"/>
        <end position="6"/>
    </location>
</feature>
<feature type="disulfide bond" evidence="1">
    <location>
        <begin position="3"/>
        <end position="17"/>
    </location>
</feature>
<feature type="disulfide bond" evidence="1">
    <location>
        <begin position="10"/>
        <end position="22"/>
    </location>
</feature>
<feature type="disulfide bond" evidence="1">
    <location>
        <begin position="16"/>
        <end position="32"/>
    </location>
</feature>
<keyword id="KW-0903">Direct protein sequencing</keyword>
<keyword id="KW-1015">Disulfide bond</keyword>
<keyword id="KW-0960">Knottin</keyword>
<keyword id="KW-0528">Neurotoxin</keyword>
<keyword id="KW-0646">Protease inhibitor</keyword>
<keyword id="KW-0964">Secreted</keyword>
<keyword id="KW-0722">Serine protease inhibitor</keyword>
<keyword id="KW-0800">Toxin</keyword>
<name>TX22_PHONI</name>
<sequence length="35" mass="4086">MPCPKILKQCKSDEDCCRGWKCFGFSIKDKMCISR</sequence>
<accession>P83998</accession>